<protein>
    <recommendedName>
        <fullName>Mannose-specific lectin 2</fullName>
    </recommendedName>
    <alternativeName>
        <fullName evidence="6">Agglutinin</fullName>
        <shortName evidence="6">CVA</shortName>
    </alternativeName>
    <alternativeName>
        <fullName evidence="6">Mannose-binding lectin</fullName>
    </alternativeName>
    <component>
        <recommendedName>
            <fullName>Mannose-specific lectin 2 chain 1</fullName>
        </recommendedName>
        <alternativeName>
            <fullName evidence="6">CVA-DOM1</fullName>
        </alternativeName>
    </component>
    <component>
        <recommendedName>
            <fullName>Mannose-specific lectin 2 chain 2</fullName>
        </recommendedName>
        <alternativeName>
            <fullName evidence="6">CVA-DOM2</fullName>
        </alternativeName>
    </component>
</protein>
<dbReference type="EMBL" id="AF233285">
    <property type="protein sequence ID" value="AAG10404.1"/>
    <property type="molecule type" value="mRNA"/>
</dbReference>
<dbReference type="SMR" id="Q9FV99"/>
<dbReference type="GO" id="GO:0005537">
    <property type="term" value="F:D-mannose binding"/>
    <property type="evidence" value="ECO:0007669"/>
    <property type="project" value="UniProtKB-KW"/>
</dbReference>
<dbReference type="GO" id="GO:0051707">
    <property type="term" value="P:response to other organism"/>
    <property type="evidence" value="ECO:0007669"/>
    <property type="project" value="UniProtKB-ARBA"/>
</dbReference>
<dbReference type="Gene3D" id="2.90.10.10">
    <property type="entry name" value="Bulb-type lectin domain"/>
    <property type="match status" value="2"/>
</dbReference>
<dbReference type="InterPro" id="IPR001480">
    <property type="entry name" value="Bulb-type_lectin_dom"/>
</dbReference>
<dbReference type="InterPro" id="IPR036426">
    <property type="entry name" value="Bulb-type_lectin_dom_sf"/>
</dbReference>
<dbReference type="SMART" id="SM00108">
    <property type="entry name" value="B_lectin"/>
    <property type="match status" value="2"/>
</dbReference>
<dbReference type="SUPFAM" id="SSF51110">
    <property type="entry name" value="alpha-D-mannose-specific plant lectins"/>
    <property type="match status" value="2"/>
</dbReference>
<dbReference type="PROSITE" id="PS50927">
    <property type="entry name" value="BULB_LECTIN"/>
    <property type="match status" value="2"/>
</dbReference>
<sequence length="263" mass="28205">MAKSLVLSSLLLALLLAAPLASLADNNVLLTGDVLHTDNQLSFESAAFVMQGDCNLVLYNEAGGFQSNTHGRGVGCTLTLNNLGQLEIHSANSNTPVWVSPRNINTVQGNYAAVLGPDQHVTIYGPAIWSTPAPNRHERRATVSDIPRVRNVLFSSQVMSDNAQLATRDYSLVMRDDCNLALTKGGQTNIVWESGTSGRGQHCFMRLGHTGLIEISDDRLNSVWRSNTVGQEGDYVLILQINGQAVVYGPAVWSTASSASAAL</sequence>
<comment type="function">
    <text evidence="5">Mannose-specific lectin. Has weak agglutinating activity towards trypsin-treated erythrocytes from rabbit but not from human.</text>
</comment>
<comment type="subunit">
    <text evidence="5">Heterotetramer of 2 domain 1 and 2 domain 2 chains arranged as a dimer of domain 1/domain 2 heterodimers.</text>
</comment>
<evidence type="ECO:0000250" key="1">
    <source>
        <dbReference type="UniProtKB" id="P86626"/>
    </source>
</evidence>
<evidence type="ECO:0000250" key="2">
    <source>
        <dbReference type="UniProtKB" id="Q9FVA1"/>
    </source>
</evidence>
<evidence type="ECO:0000255" key="3"/>
<evidence type="ECO:0000255" key="4">
    <source>
        <dbReference type="PROSITE-ProRule" id="PRU00038"/>
    </source>
</evidence>
<evidence type="ECO:0000269" key="5">
    <source>
    </source>
</evidence>
<evidence type="ECO:0000303" key="6">
    <source>
    </source>
</evidence>
<evidence type="ECO:0000305" key="7"/>
<evidence type="ECO:0000312" key="8">
    <source>
        <dbReference type="EMBL" id="AAG10404.1"/>
    </source>
</evidence>
<feature type="signal peptide" evidence="3">
    <location>
        <begin position="1"/>
        <end position="24"/>
    </location>
</feature>
<feature type="chain" id="PRO_0000395436" description="Mannose-specific lectin 2 chain 1" evidence="5">
    <location>
        <begin position="25"/>
        <end position="144"/>
    </location>
</feature>
<feature type="chain" id="PRO_0000395437" description="Mannose-specific lectin 2 chain 2" evidence="2">
    <location>
        <begin position="145"/>
        <end position="263"/>
    </location>
</feature>
<feature type="domain" description="Bulb-type lectin 1" evidence="4">
    <location>
        <begin position="26"/>
        <end position="136"/>
    </location>
</feature>
<feature type="domain" description="Bulb-type lectin 2" evidence="4">
    <location>
        <begin position="150"/>
        <end position="260"/>
    </location>
</feature>
<feature type="disulfide bond" evidence="1 4">
    <location>
        <begin position="54"/>
        <end position="76"/>
    </location>
</feature>
<feature type="disulfide bond" evidence="1 4">
    <location>
        <begin position="178"/>
        <end position="203"/>
    </location>
</feature>
<proteinExistence type="evidence at protein level"/>
<organism>
    <name type="scientific">Crocus vernus</name>
    <name type="common">Dutch crocus</name>
    <dbReference type="NCBI Taxonomy" id="87752"/>
    <lineage>
        <taxon>Eukaryota</taxon>
        <taxon>Viridiplantae</taxon>
        <taxon>Streptophyta</taxon>
        <taxon>Embryophyta</taxon>
        <taxon>Tracheophyta</taxon>
        <taxon>Spermatophyta</taxon>
        <taxon>Magnoliopsida</taxon>
        <taxon>Liliopsida</taxon>
        <taxon>Asparagales</taxon>
        <taxon>Iridaceae</taxon>
        <taxon>Crocoideae</taxon>
        <taxon>Croceae</taxon>
        <taxon>Crocus</taxon>
    </lineage>
</organism>
<gene>
    <name evidence="8" type="primary">LECCVA2</name>
</gene>
<reference evidence="7 8" key="1">
    <citation type="journal article" date="2000" name="Eur. J. Biochem.">
        <title>Cloning and characterization of a monocot mannose-binding lectin from Crocus vernus (family Iridaceae).</title>
        <authorList>
            <person name="Van Damme E.J."/>
            <person name="Astoul C.H."/>
            <person name="Barre A."/>
            <person name="Rouge P."/>
            <person name="Peumans W.J."/>
        </authorList>
    </citation>
    <scope>NUCLEOTIDE SEQUENCE [MRNA]</scope>
    <scope>FUNCTION</scope>
    <scope>SUBUNIT</scope>
    <source>
        <tissue evidence="5">Tuber</tissue>
    </source>
</reference>
<name>LEC2_CROVR</name>
<accession>Q9FV99</accession>
<keyword id="KW-1015">Disulfide bond</keyword>
<keyword id="KW-0348">Hemagglutinin</keyword>
<keyword id="KW-0430">Lectin</keyword>
<keyword id="KW-0465">Mannose-binding</keyword>
<keyword id="KW-0677">Repeat</keyword>
<keyword id="KW-0732">Signal</keyword>